<comment type="function">
    <text evidence="5 6 7">Involved in protein precursor import into chloroplasts. Imported into the intermembrane space via the Toc translocon. May be involved in the import pathway used by proteins without a cleavable N-terminal pre-sequence.</text>
</comment>
<comment type="subunit">
    <text evidence="2 3 7">Part of the Tic complex. Interacts with TIC20 and with the Toc complex. Interacts with TIC32 during its import into the chloroplast.</text>
</comment>
<comment type="subcellular location">
    <subcellularLocation>
        <location evidence="1 4 7">Plastid</location>
        <location evidence="1 4 7">Chloroplast intermembrane space</location>
        <topology evidence="1 4 7">Peripheral membrane protein</topology>
    </subcellularLocation>
</comment>
<comment type="domain">
    <text>The N-terminus (1-54) is necessary and sufficient for targeting to the intermembrane space by an import pathway that is distinct from the general import pathway utilized by stromal preproteins.</text>
</comment>
<comment type="similarity">
    <text evidence="8">Belongs to the Tic22 family.</text>
</comment>
<keyword id="KW-0150">Chloroplast</keyword>
<keyword id="KW-0903">Direct protein sequencing</keyword>
<keyword id="KW-0472">Membrane</keyword>
<keyword id="KW-0934">Plastid</keyword>
<keyword id="KW-0653">Protein transport</keyword>
<keyword id="KW-0809">Transit peptide</keyword>
<keyword id="KW-0813">Transport</keyword>
<feature type="transit peptide" description="Chloroplast" evidence="7">
    <location>
        <begin position="1"/>
        <end position="50"/>
    </location>
</feature>
<feature type="chain" id="PRO_0000413672" description="Protein TIC 22, chloroplastic">
    <location>
        <begin position="51"/>
        <end position="252"/>
    </location>
</feature>
<protein>
    <recommendedName>
        <fullName>Protein TIC 22, chloroplastic</fullName>
    </recommendedName>
    <alternativeName>
        <fullName>Translocon at the inner envelope membrane of chloroplasts 22</fullName>
        <shortName>PsTIC22</shortName>
    </alternativeName>
</protein>
<proteinExistence type="evidence at protein level"/>
<name>TIC22_PEA</name>
<organism>
    <name type="scientific">Pisum sativum</name>
    <name type="common">Garden pea</name>
    <name type="synonym">Lathyrus oleraceus</name>
    <dbReference type="NCBI Taxonomy" id="3888"/>
    <lineage>
        <taxon>Eukaryota</taxon>
        <taxon>Viridiplantae</taxon>
        <taxon>Streptophyta</taxon>
        <taxon>Embryophyta</taxon>
        <taxon>Tracheophyta</taxon>
        <taxon>Spermatophyta</taxon>
        <taxon>Magnoliopsida</taxon>
        <taxon>eudicotyledons</taxon>
        <taxon>Gunneridae</taxon>
        <taxon>Pentapetalae</taxon>
        <taxon>rosids</taxon>
        <taxon>fabids</taxon>
        <taxon>Fabales</taxon>
        <taxon>Fabaceae</taxon>
        <taxon>Papilionoideae</taxon>
        <taxon>50 kb inversion clade</taxon>
        <taxon>NPAAA clade</taxon>
        <taxon>Hologalegina</taxon>
        <taxon>IRL clade</taxon>
        <taxon>Fabeae</taxon>
        <taxon>Pisum</taxon>
    </lineage>
</organism>
<reference key="1">
    <citation type="journal article" date="1998" name="J. Cell Biol.">
        <title>Tic20 and Tic22 are new components of the protein import apparatus at the chloroplast inner envelope membrane.</title>
        <authorList>
            <person name="Kouranov A."/>
            <person name="Chen X."/>
            <person name="Fuks B."/>
            <person name="Schnell D.J."/>
        </authorList>
    </citation>
    <scope>NUCLEOTIDE SEQUENCE [MRNA]</scope>
    <scope>PROTEIN SEQUENCE OF 51-70; 119-127 AND 132-147</scope>
    <scope>FUNCTION</scope>
    <scope>SUBCELLULAR LOCATION</scope>
    <scope>INTERACTION WITH TIC20</scope>
</reference>
<reference key="2">
    <citation type="journal article" date="1996" name="J. Cell Biol.">
        <title>Two components of the chloroplast protein import apparatus, IAP86 and IAP75, interact with the transit sequence during the recognition and translocation of precursor proteins at the outer envelope.</title>
        <authorList>
            <person name="Ma Y."/>
            <person name="Kouranov A."/>
            <person name="LaSala S.E."/>
            <person name="Schnell D.J."/>
        </authorList>
    </citation>
    <scope>FUNCTION</scope>
</reference>
<reference key="3">
    <citation type="journal article" date="1997" name="J. Cell Biol.">
        <title>Analysis of the interactions of preproteins with the import machinery over the course of protein import into chloroplasts.</title>
        <authorList>
            <person name="Kouranov A."/>
            <person name="Schnell D.J."/>
        </authorList>
    </citation>
    <scope>FUNCTION</scope>
</reference>
<reference key="4">
    <citation type="journal article" date="1999" name="J. Biol. Chem.">
        <title>Tic22 is targeted to the intermembrane space of chloroplasts by a novel pathway.</title>
        <authorList>
            <person name="Kouranov A."/>
            <person name="Wang H."/>
            <person name="Schnell D.J."/>
        </authorList>
    </citation>
    <scope>SUBCELLULAR LOCATION</scope>
</reference>
<reference key="5">
    <citation type="journal article" date="2004" name="J. Cell Sci.">
        <title>Inner envelope protein 32 is imported into chloroplasts by a novel pathway.</title>
        <authorList>
            <person name="Nada A."/>
            <person name="Soll J."/>
        </authorList>
    </citation>
    <scope>INTERACTION WITH TIC32</scope>
</reference>
<reference key="6">
    <citation type="journal article" date="2007" name="FEBS J.">
        <title>Protein transport in chloroplasts - targeting to the intermembrane space.</title>
        <authorList>
            <person name="Vojta L."/>
            <person name="Soll J."/>
            <person name="Boelter B."/>
        </authorList>
    </citation>
    <scope>SUBCELLULAR LOCATION</scope>
</reference>
<reference key="7">
    <citation type="journal article" date="2007" name="J. Mol. Biol.">
        <title>Toc64--a preprotein-receptor at the outer membrane with bipartide function.</title>
        <authorList>
            <person name="Qbadou S."/>
            <person name="Becker T."/>
            <person name="Bionda T."/>
            <person name="Reger K."/>
            <person name="Ruprecht M."/>
            <person name="Soll J."/>
            <person name="Schleiff E."/>
        </authorList>
    </citation>
    <scope>INTERACTION WITH TOC64</scope>
</reference>
<reference key="8">
    <citation type="journal article" date="2010" name="Biochim. Biophys. Acta">
        <title>Protein import into chloroplasts: the Tic complex and its regulation.</title>
        <authorList>
            <person name="Kovacs-Bogdan E."/>
            <person name="Soll J."/>
            <person name="Bolter B."/>
        </authorList>
    </citation>
    <scope>REVIEW</scope>
</reference>
<accession>Q9ZST9</accession>
<sequence length="252" mass="28200">MESQGQWNPLLSFSRFINHHSNHLATRLEETKRLAGTLIQSHTRTKPAFAATLTPNHVAKSLAGTSVYTVSNSDNEFVLMSDAEGAKSIGLLCFRQEDAEAFLAQVRSRKKEFRGGAKVVPITLDQVYMLKVEGIAFRFLPDPVQIKNALELRAANRGSFDGVPVFQSDLLVVKKKNKRYCPVYFSKEDLEYELSKVSRSSKGVGVSQHIMVGSFEDVLKKMELSEKSSGWEDLVFIPPGKKHSQHMQEVIA</sequence>
<evidence type="ECO:0000269" key="1">
    <source>
    </source>
</evidence>
<evidence type="ECO:0000269" key="2">
    <source>
    </source>
</evidence>
<evidence type="ECO:0000269" key="3">
    <source>
    </source>
</evidence>
<evidence type="ECO:0000269" key="4">
    <source>
    </source>
</evidence>
<evidence type="ECO:0000269" key="5">
    <source>
    </source>
</evidence>
<evidence type="ECO:0000269" key="6">
    <source>
    </source>
</evidence>
<evidence type="ECO:0000269" key="7">
    <source>
    </source>
</evidence>
<evidence type="ECO:0000305" key="8"/>
<dbReference type="EMBL" id="AF095284">
    <property type="protein sequence ID" value="AAC64606.1"/>
    <property type="molecule type" value="mRNA"/>
</dbReference>
<dbReference type="SMR" id="Q9ZST9"/>
<dbReference type="IntAct" id="Q9ZST9">
    <property type="interactions" value="3"/>
</dbReference>
<dbReference type="TCDB" id="3.A.9.1.1">
    <property type="family name" value="the chloroplast envelope protein translocase (cept or tic-toc) family"/>
</dbReference>
<dbReference type="EnsemblPlants" id="Psat5g042920.1">
    <property type="protein sequence ID" value="Psat5g042920.1.cds"/>
    <property type="gene ID" value="Psat5g042920"/>
</dbReference>
<dbReference type="EnsemblPlants" id="Psat5g042920.2">
    <property type="protein sequence ID" value="Psat5g042920.2.cds"/>
    <property type="gene ID" value="Psat5g042920"/>
</dbReference>
<dbReference type="EnsemblPlants" id="Psat5g042920.4">
    <property type="protein sequence ID" value="Psat5g042920.4.cds"/>
    <property type="gene ID" value="Psat5g042920"/>
</dbReference>
<dbReference type="Gramene" id="Psat5g042920.1">
    <property type="protein sequence ID" value="Psat5g042920.1.cds"/>
    <property type="gene ID" value="Psat5g042920"/>
</dbReference>
<dbReference type="Gramene" id="Psat5g042920.2">
    <property type="protein sequence ID" value="Psat5g042920.2.cds"/>
    <property type="gene ID" value="Psat5g042920"/>
</dbReference>
<dbReference type="Gramene" id="Psat5g042920.4">
    <property type="protein sequence ID" value="Psat5g042920.4.cds"/>
    <property type="gene ID" value="Psat5g042920"/>
</dbReference>
<dbReference type="OrthoDB" id="196308at2759"/>
<dbReference type="GO" id="GO:0031972">
    <property type="term" value="C:chloroplast intermembrane space"/>
    <property type="evidence" value="ECO:0007669"/>
    <property type="project" value="UniProtKB-SubCell"/>
</dbReference>
<dbReference type="GO" id="GO:0016020">
    <property type="term" value="C:membrane"/>
    <property type="evidence" value="ECO:0007669"/>
    <property type="project" value="UniProtKB-KW"/>
</dbReference>
<dbReference type="GO" id="GO:0015031">
    <property type="term" value="P:protein transport"/>
    <property type="evidence" value="ECO:0007669"/>
    <property type="project" value="UniProtKB-KW"/>
</dbReference>
<dbReference type="FunFam" id="3.40.1350.100:FF:000001">
    <property type="entry name" value="Protein TIC 22, chloroplastic"/>
    <property type="match status" value="1"/>
</dbReference>
<dbReference type="Gene3D" id="3.40.1350.100">
    <property type="match status" value="2"/>
</dbReference>
<dbReference type="InterPro" id="IPR005692">
    <property type="entry name" value="Tic22"/>
</dbReference>
<dbReference type="InterPro" id="IPR007378">
    <property type="entry name" value="Tic22-like"/>
</dbReference>
<dbReference type="NCBIfam" id="TIGR00995">
    <property type="entry name" value="3a0901s06TIC22"/>
    <property type="match status" value="1"/>
</dbReference>
<dbReference type="PANTHER" id="PTHR33926">
    <property type="entry name" value="PROTEIN TIC 22, CHLOROPLASTIC"/>
    <property type="match status" value="1"/>
</dbReference>
<dbReference type="PANTHER" id="PTHR33926:SF4">
    <property type="entry name" value="PROTEIN TIC 22, CHLOROPLASTIC"/>
    <property type="match status" value="1"/>
</dbReference>
<dbReference type="Pfam" id="PF04278">
    <property type="entry name" value="Tic22"/>
    <property type="match status" value="1"/>
</dbReference>
<gene>
    <name type="primary">TIC22</name>
    <name type="synonym">IAP25</name>
</gene>